<proteinExistence type="inferred from homology"/>
<organism>
    <name type="scientific">Methylorubrum extorquens (strain PA1)</name>
    <name type="common">Methylobacterium extorquens</name>
    <dbReference type="NCBI Taxonomy" id="419610"/>
    <lineage>
        <taxon>Bacteria</taxon>
        <taxon>Pseudomonadati</taxon>
        <taxon>Pseudomonadota</taxon>
        <taxon>Alphaproteobacteria</taxon>
        <taxon>Hyphomicrobiales</taxon>
        <taxon>Methylobacteriaceae</taxon>
        <taxon>Methylorubrum</taxon>
    </lineage>
</organism>
<protein>
    <recommendedName>
        <fullName evidence="1">Holo-[acyl-carrier-protein] synthase</fullName>
        <shortName evidence="1">Holo-ACP synthase</shortName>
        <ecNumber evidence="1">2.7.8.7</ecNumber>
    </recommendedName>
    <alternativeName>
        <fullName evidence="1">4'-phosphopantetheinyl transferase AcpS</fullName>
    </alternativeName>
</protein>
<sequence length="136" mass="14840">MILGIGTDLCDIRRIESSLERFGDRFTHRVFTDGERGKCDQRAARGPSYARRFAAKEACAKALGTGMSQGVFWRDMEVVNLPSGQPTLNLTGGAREQLARMVPAGHEARLHLTLTDEPPLAQAFVIIEAVPITATS</sequence>
<dbReference type="EC" id="2.7.8.7" evidence="1"/>
<dbReference type="EMBL" id="CP000908">
    <property type="protein sequence ID" value="ABY30667.1"/>
    <property type="molecule type" value="Genomic_DNA"/>
</dbReference>
<dbReference type="RefSeq" id="WP_012253716.1">
    <property type="nucleotide sequence ID" value="NC_010172.1"/>
</dbReference>
<dbReference type="SMR" id="A9W511"/>
<dbReference type="KEGG" id="mex:Mext_2272"/>
<dbReference type="eggNOG" id="COG0736">
    <property type="taxonomic scope" value="Bacteria"/>
</dbReference>
<dbReference type="HOGENOM" id="CLU_089696_0_2_5"/>
<dbReference type="BioCyc" id="MEXT419610:MEXT_RS11455-MONOMER"/>
<dbReference type="GO" id="GO:0005737">
    <property type="term" value="C:cytoplasm"/>
    <property type="evidence" value="ECO:0007669"/>
    <property type="project" value="UniProtKB-SubCell"/>
</dbReference>
<dbReference type="GO" id="GO:0008897">
    <property type="term" value="F:holo-[acyl-carrier-protein] synthase activity"/>
    <property type="evidence" value="ECO:0007669"/>
    <property type="project" value="UniProtKB-UniRule"/>
</dbReference>
<dbReference type="GO" id="GO:0000287">
    <property type="term" value="F:magnesium ion binding"/>
    <property type="evidence" value="ECO:0007669"/>
    <property type="project" value="UniProtKB-UniRule"/>
</dbReference>
<dbReference type="GO" id="GO:0006633">
    <property type="term" value="P:fatty acid biosynthetic process"/>
    <property type="evidence" value="ECO:0007669"/>
    <property type="project" value="UniProtKB-UniRule"/>
</dbReference>
<dbReference type="Gene3D" id="3.90.470.20">
    <property type="entry name" value="4'-phosphopantetheinyl transferase domain"/>
    <property type="match status" value="1"/>
</dbReference>
<dbReference type="HAMAP" id="MF_00101">
    <property type="entry name" value="AcpS"/>
    <property type="match status" value="1"/>
</dbReference>
<dbReference type="InterPro" id="IPR008278">
    <property type="entry name" value="4-PPantetheinyl_Trfase_dom"/>
</dbReference>
<dbReference type="InterPro" id="IPR037143">
    <property type="entry name" value="4-PPantetheinyl_Trfase_dom_sf"/>
</dbReference>
<dbReference type="InterPro" id="IPR002582">
    <property type="entry name" value="ACPS"/>
</dbReference>
<dbReference type="InterPro" id="IPR004568">
    <property type="entry name" value="Ppantetheine-prot_Trfase_dom"/>
</dbReference>
<dbReference type="NCBIfam" id="TIGR00516">
    <property type="entry name" value="acpS"/>
    <property type="match status" value="1"/>
</dbReference>
<dbReference type="NCBIfam" id="TIGR00556">
    <property type="entry name" value="pantethn_trn"/>
    <property type="match status" value="1"/>
</dbReference>
<dbReference type="Pfam" id="PF01648">
    <property type="entry name" value="ACPS"/>
    <property type="match status" value="1"/>
</dbReference>
<dbReference type="SUPFAM" id="SSF56214">
    <property type="entry name" value="4'-phosphopantetheinyl transferase"/>
    <property type="match status" value="1"/>
</dbReference>
<comment type="function">
    <text evidence="1">Transfers the 4'-phosphopantetheine moiety from coenzyme A to a Ser of acyl-carrier-protein.</text>
</comment>
<comment type="catalytic activity">
    <reaction evidence="1">
        <text>apo-[ACP] + CoA = holo-[ACP] + adenosine 3',5'-bisphosphate + H(+)</text>
        <dbReference type="Rhea" id="RHEA:12068"/>
        <dbReference type="Rhea" id="RHEA-COMP:9685"/>
        <dbReference type="Rhea" id="RHEA-COMP:9690"/>
        <dbReference type="ChEBI" id="CHEBI:15378"/>
        <dbReference type="ChEBI" id="CHEBI:29999"/>
        <dbReference type="ChEBI" id="CHEBI:57287"/>
        <dbReference type="ChEBI" id="CHEBI:58343"/>
        <dbReference type="ChEBI" id="CHEBI:64479"/>
        <dbReference type="EC" id="2.7.8.7"/>
    </reaction>
</comment>
<comment type="cofactor">
    <cofactor evidence="1">
        <name>Mg(2+)</name>
        <dbReference type="ChEBI" id="CHEBI:18420"/>
    </cofactor>
</comment>
<comment type="subcellular location">
    <subcellularLocation>
        <location evidence="1">Cytoplasm</location>
    </subcellularLocation>
</comment>
<comment type="similarity">
    <text evidence="1">Belongs to the P-Pant transferase superfamily. AcpS family.</text>
</comment>
<keyword id="KW-0963">Cytoplasm</keyword>
<keyword id="KW-0275">Fatty acid biosynthesis</keyword>
<keyword id="KW-0276">Fatty acid metabolism</keyword>
<keyword id="KW-0444">Lipid biosynthesis</keyword>
<keyword id="KW-0443">Lipid metabolism</keyword>
<keyword id="KW-0460">Magnesium</keyword>
<keyword id="KW-0479">Metal-binding</keyword>
<keyword id="KW-0808">Transferase</keyword>
<gene>
    <name evidence="1" type="primary">acpS</name>
    <name type="ordered locus">Mext_2272</name>
</gene>
<name>ACPS_METEP</name>
<evidence type="ECO:0000255" key="1">
    <source>
        <dbReference type="HAMAP-Rule" id="MF_00101"/>
    </source>
</evidence>
<feature type="chain" id="PRO_1000093893" description="Holo-[acyl-carrier-protein] synthase">
    <location>
        <begin position="1"/>
        <end position="136"/>
    </location>
</feature>
<feature type="binding site" evidence="1">
    <location>
        <position position="8"/>
    </location>
    <ligand>
        <name>Mg(2+)</name>
        <dbReference type="ChEBI" id="CHEBI:18420"/>
    </ligand>
</feature>
<feature type="binding site" evidence="1">
    <location>
        <position position="57"/>
    </location>
    <ligand>
        <name>Mg(2+)</name>
        <dbReference type="ChEBI" id="CHEBI:18420"/>
    </ligand>
</feature>
<reference key="1">
    <citation type="submission" date="2007-12" db="EMBL/GenBank/DDBJ databases">
        <title>Complete sequence of Methylobacterium extorquens PA1.</title>
        <authorList>
            <consortium name="US DOE Joint Genome Institute"/>
            <person name="Copeland A."/>
            <person name="Lucas S."/>
            <person name="Lapidus A."/>
            <person name="Barry K."/>
            <person name="Glavina del Rio T."/>
            <person name="Dalin E."/>
            <person name="Tice H."/>
            <person name="Pitluck S."/>
            <person name="Saunders E."/>
            <person name="Brettin T."/>
            <person name="Bruce D."/>
            <person name="Detter J.C."/>
            <person name="Han C."/>
            <person name="Schmutz J."/>
            <person name="Larimer F."/>
            <person name="Land M."/>
            <person name="Hauser L."/>
            <person name="Kyrpides N."/>
            <person name="Kim E."/>
            <person name="Marx C."/>
            <person name="Richardson P."/>
        </authorList>
    </citation>
    <scope>NUCLEOTIDE SEQUENCE [LARGE SCALE GENOMIC DNA]</scope>
    <source>
        <strain>PA1</strain>
    </source>
</reference>
<accession>A9W511</accession>